<sequence>MSTSVAGVLAVALLVAALWVTYRPFGDYMYRVFAAKRHLRVERAIYRLTGVNPDTGQRWPVYARSVLAFSLVSVLLLYLLQRVQEHLPLNLGFGAVGPALAWNTAVSFMTNTNWQAYSGESTMGHTVQMTGLAVQNFVSAAVGIAVAIAVVRGFARRRAPVAVGGPGGPNGPGGPGGPNGPGAGSRDDVIGTGDELGNFWVDLTRTVIRILLPVCVIAAIVLVAGGAIQNLHGNRVVSTLAGGHQTITGGPVASQEAIKEFGTNGGGFYNVNSAHPFENPTSWTNLVEIFLLLAIAFSLPRTFGRMVGDRRQGLAIVAVMAVLALGSFAVNAAFQTAHHGTVPVAVGAATEGTDTRFGVPNSALFASATTLTSTGAVNSFHDSYTSLGGATLLFNMMLGEVAPGGTGSGLYGMLVLAVVTVFVAGLMIGRTPEYLGKKIGSREIKFASLYFLATPAIALLGTGVAMGLPGERASMLNSGAHGLSEVLYAFTSAANNNGSAFGGISVNTTWYNTALGLAMLFGRLLPMLLVLGMAGSFARQHPVPATAGTLPTHRPQFAGMLGAIALIIVALTFFPALALGPLAEGIH</sequence>
<organism>
    <name type="scientific">Frankia alni (strain DSM 45986 / CECT 9034 / ACN14a)</name>
    <dbReference type="NCBI Taxonomy" id="326424"/>
    <lineage>
        <taxon>Bacteria</taxon>
        <taxon>Bacillati</taxon>
        <taxon>Actinomycetota</taxon>
        <taxon>Actinomycetes</taxon>
        <taxon>Frankiales</taxon>
        <taxon>Frankiaceae</taxon>
        <taxon>Frankia</taxon>
    </lineage>
</organism>
<proteinExistence type="inferred from homology"/>
<protein>
    <recommendedName>
        <fullName evidence="1">Potassium-transporting ATPase potassium-binding subunit</fullName>
    </recommendedName>
    <alternativeName>
        <fullName evidence="1">ATP phosphohydrolase [potassium-transporting] A chain</fullName>
    </alternativeName>
    <alternativeName>
        <fullName evidence="1">Potassium-binding and translocating subunit A</fullName>
    </alternativeName>
    <alternativeName>
        <fullName evidence="1">Potassium-translocating ATPase A chain</fullName>
    </alternativeName>
</protein>
<accession>Q0RF16</accession>
<keyword id="KW-1003">Cell membrane</keyword>
<keyword id="KW-0406">Ion transport</keyword>
<keyword id="KW-0472">Membrane</keyword>
<keyword id="KW-0630">Potassium</keyword>
<keyword id="KW-0633">Potassium transport</keyword>
<keyword id="KW-1185">Reference proteome</keyword>
<keyword id="KW-0812">Transmembrane</keyword>
<keyword id="KW-1133">Transmembrane helix</keyword>
<keyword id="KW-0813">Transport</keyword>
<gene>
    <name evidence="1" type="primary">kdpA</name>
    <name type="ordered locus">FRAAL5302</name>
</gene>
<comment type="function">
    <text evidence="1">Part of the high-affinity ATP-driven potassium transport (or Kdp) system, which catalyzes the hydrolysis of ATP coupled with the electrogenic transport of potassium into the cytoplasm. This subunit binds the extracellular potassium ions and delivers the ions to the membrane domain of KdpB through an intramembrane tunnel.</text>
</comment>
<comment type="subunit">
    <text evidence="1">The system is composed of three essential subunits: KdpA, KdpB and KdpC.</text>
</comment>
<comment type="subcellular location">
    <subcellularLocation>
        <location evidence="1">Cell membrane</location>
        <topology evidence="1">Multi-pass membrane protein</topology>
    </subcellularLocation>
</comment>
<comment type="similarity">
    <text evidence="1">Belongs to the KdpA family.</text>
</comment>
<name>KDPA_FRAAA</name>
<feature type="chain" id="PRO_1000114684" description="Potassium-transporting ATPase potassium-binding subunit">
    <location>
        <begin position="1"/>
        <end position="587"/>
    </location>
</feature>
<feature type="transmembrane region" description="Helical" evidence="1">
    <location>
        <begin position="1"/>
        <end position="21"/>
    </location>
</feature>
<feature type="transmembrane region" description="Helical" evidence="1">
    <location>
        <begin position="60"/>
        <end position="80"/>
    </location>
</feature>
<feature type="transmembrane region" description="Helical" evidence="1">
    <location>
        <begin position="89"/>
        <end position="109"/>
    </location>
</feature>
<feature type="transmembrane region" description="Helical" evidence="1">
    <location>
        <begin position="131"/>
        <end position="151"/>
    </location>
</feature>
<feature type="transmembrane region" description="Helical" evidence="1">
    <location>
        <begin position="208"/>
        <end position="228"/>
    </location>
</feature>
<feature type="transmembrane region" description="Helical" evidence="1">
    <location>
        <begin position="280"/>
        <end position="300"/>
    </location>
</feature>
<feature type="transmembrane region" description="Helical" evidence="1">
    <location>
        <begin position="314"/>
        <end position="334"/>
    </location>
</feature>
<feature type="transmembrane region" description="Helical" evidence="1">
    <location>
        <begin position="409"/>
        <end position="429"/>
    </location>
</feature>
<feature type="transmembrane region" description="Helical" evidence="1">
    <location>
        <begin position="449"/>
        <end position="469"/>
    </location>
</feature>
<feature type="transmembrane region" description="Helical" evidence="1">
    <location>
        <begin position="514"/>
        <end position="534"/>
    </location>
</feature>
<feature type="transmembrane region" description="Helical" evidence="1">
    <location>
        <begin position="557"/>
        <end position="577"/>
    </location>
</feature>
<feature type="region of interest" description="Disordered" evidence="2">
    <location>
        <begin position="162"/>
        <end position="188"/>
    </location>
</feature>
<feature type="compositionally biased region" description="Gly residues" evidence="2">
    <location>
        <begin position="164"/>
        <end position="183"/>
    </location>
</feature>
<evidence type="ECO:0000255" key="1">
    <source>
        <dbReference type="HAMAP-Rule" id="MF_00275"/>
    </source>
</evidence>
<evidence type="ECO:0000256" key="2">
    <source>
        <dbReference type="SAM" id="MobiDB-lite"/>
    </source>
</evidence>
<dbReference type="EMBL" id="CT573213">
    <property type="protein sequence ID" value="CAJ63935.1"/>
    <property type="molecule type" value="Genomic_DNA"/>
</dbReference>
<dbReference type="RefSeq" id="WP_011606393.1">
    <property type="nucleotide sequence ID" value="NC_008278.1"/>
</dbReference>
<dbReference type="SMR" id="Q0RF16"/>
<dbReference type="STRING" id="326424.FRAAL5302"/>
<dbReference type="KEGG" id="fal:FRAAL5302"/>
<dbReference type="eggNOG" id="COG2060">
    <property type="taxonomic scope" value="Bacteria"/>
</dbReference>
<dbReference type="HOGENOM" id="CLU_018614_3_0_11"/>
<dbReference type="OrthoDB" id="9763796at2"/>
<dbReference type="Proteomes" id="UP000000657">
    <property type="component" value="Chromosome"/>
</dbReference>
<dbReference type="GO" id="GO:0005886">
    <property type="term" value="C:plasma membrane"/>
    <property type="evidence" value="ECO:0007669"/>
    <property type="project" value="UniProtKB-SubCell"/>
</dbReference>
<dbReference type="GO" id="GO:0008556">
    <property type="term" value="F:P-type potassium transmembrane transporter activity"/>
    <property type="evidence" value="ECO:0007669"/>
    <property type="project" value="InterPro"/>
</dbReference>
<dbReference type="GO" id="GO:0030955">
    <property type="term" value="F:potassium ion binding"/>
    <property type="evidence" value="ECO:0007669"/>
    <property type="project" value="UniProtKB-UniRule"/>
</dbReference>
<dbReference type="HAMAP" id="MF_00275">
    <property type="entry name" value="KdpA"/>
    <property type="match status" value="1"/>
</dbReference>
<dbReference type="InterPro" id="IPR004623">
    <property type="entry name" value="KdpA"/>
</dbReference>
<dbReference type="NCBIfam" id="TIGR00680">
    <property type="entry name" value="kdpA"/>
    <property type="match status" value="1"/>
</dbReference>
<dbReference type="PANTHER" id="PTHR30607">
    <property type="entry name" value="POTASSIUM-TRANSPORTING ATPASE A CHAIN"/>
    <property type="match status" value="1"/>
</dbReference>
<dbReference type="PANTHER" id="PTHR30607:SF2">
    <property type="entry name" value="POTASSIUM-TRANSPORTING ATPASE POTASSIUM-BINDING SUBUNIT"/>
    <property type="match status" value="1"/>
</dbReference>
<dbReference type="Pfam" id="PF03814">
    <property type="entry name" value="KdpA"/>
    <property type="match status" value="1"/>
</dbReference>
<dbReference type="PIRSF" id="PIRSF001294">
    <property type="entry name" value="K_ATPaseA"/>
    <property type="match status" value="1"/>
</dbReference>
<reference key="1">
    <citation type="journal article" date="2007" name="Genome Res.">
        <title>Genome characteristics of facultatively symbiotic Frankia sp. strains reflect host range and host plant biogeography.</title>
        <authorList>
            <person name="Normand P."/>
            <person name="Lapierre P."/>
            <person name="Tisa L.S."/>
            <person name="Gogarten J.P."/>
            <person name="Alloisio N."/>
            <person name="Bagnarol E."/>
            <person name="Bassi C.A."/>
            <person name="Berry A.M."/>
            <person name="Bickhart D.M."/>
            <person name="Choisne N."/>
            <person name="Couloux A."/>
            <person name="Cournoyer B."/>
            <person name="Cruveiller S."/>
            <person name="Daubin V."/>
            <person name="Demange N."/>
            <person name="Francino M.P."/>
            <person name="Goltsman E."/>
            <person name="Huang Y."/>
            <person name="Kopp O.R."/>
            <person name="Labarre L."/>
            <person name="Lapidus A."/>
            <person name="Lavire C."/>
            <person name="Marechal J."/>
            <person name="Martinez M."/>
            <person name="Mastronunzio J.E."/>
            <person name="Mullin B.C."/>
            <person name="Niemann J."/>
            <person name="Pujic P."/>
            <person name="Rawnsley T."/>
            <person name="Rouy Z."/>
            <person name="Schenowitz C."/>
            <person name="Sellstedt A."/>
            <person name="Tavares F."/>
            <person name="Tomkins J.P."/>
            <person name="Vallenet D."/>
            <person name="Valverde C."/>
            <person name="Wall L.G."/>
            <person name="Wang Y."/>
            <person name="Medigue C."/>
            <person name="Benson D.R."/>
        </authorList>
    </citation>
    <scope>NUCLEOTIDE SEQUENCE [LARGE SCALE GENOMIC DNA]</scope>
    <source>
        <strain>DSM 45986 / CECT 9034 / ACN14a</strain>
    </source>
</reference>